<name>ADCS_STRVP</name>
<keyword id="KW-0002">3D-structure</keyword>
<keyword id="KW-0045">Antibiotic biosynthesis</keyword>
<keyword id="KW-0315">Glutamine amidotransferase</keyword>
<keyword id="KW-0511">Multifunctional enzyme</keyword>
<keyword id="KW-1185">Reference proteome</keyword>
<keyword id="KW-0808">Transferase</keyword>
<accession>F2RB79</accession>
<accession>Q56151</accession>
<reference key="1">
    <citation type="journal article" date="1996" name="Microbiology">
        <title>A role for pabAB, a p-aminobenzoate synthase gene of Streptomyces venezuelae ISP5230, in chloramphenicol biosynthesis.</title>
        <authorList>
            <person name="Brown M.P."/>
            <person name="Aidoo K.A."/>
            <person name="Vining L.C."/>
        </authorList>
    </citation>
    <scope>NUCLEOTIDE SEQUENCE [GENOMIC DNA]</scope>
    <scope>FUNCTION</scope>
    <scope>PATHWAY</scope>
    <scope>DISRUPTION PHENOTYPE</scope>
    <source>
        <strain>ATCC 10712 / CBS 650.69 / DSM 40230 / JCM 4526 / NBRC 13096 / PD 04745</strain>
    </source>
</reference>
<reference key="2">
    <citation type="journal article" date="2011" name="BMC Genomics">
        <title>Genome-wide analysis of the role of GlnR in Streptomyces venezuelae provides new insights into global nitrogen regulation in actinomycetes.</title>
        <authorList>
            <person name="Pullan S.T."/>
            <person name="Chandra G."/>
            <person name="Bibb M.J."/>
            <person name="Merrick M."/>
        </authorList>
    </citation>
    <scope>NUCLEOTIDE SEQUENCE [LARGE SCALE GENOMIC DNA]</scope>
    <source>
        <strain>ATCC 10712 / CBS 650.69 / DSM 40230 / JCM 4526 / NBRC 13096 / PD 04745</strain>
    </source>
</reference>
<reference key="3">
    <citation type="journal article" date="2014" name="Antimicrob. Agents Chemother.">
        <title>New insights into chloramphenicol biosynthesis in Streptomyces venezuelae ATCC 10712.</title>
        <authorList>
            <person name="Fernandez-Martinez L.T."/>
            <person name="Borsetto C."/>
            <person name="Gomez-Escribano J.P."/>
            <person name="Bibb M.J."/>
            <person name="Al-Bassam M.M."/>
            <person name="Chandra G."/>
            <person name="Bibb M.J."/>
        </authorList>
    </citation>
    <scope>NOMENCLATURE</scope>
    <source>
        <strain>ATCC 10712 / CBS 650.69 / DSM 40230 / JCM 4526 / NBRC 13096 / PD 04745</strain>
    </source>
</reference>
<dbReference type="EC" id="2.6.1.85" evidence="1"/>
<dbReference type="EMBL" id="U21728">
    <property type="protein sequence ID" value="AAB30312.1"/>
    <property type="molecule type" value="Genomic_DNA"/>
</dbReference>
<dbReference type="EMBL" id="FR845719">
    <property type="protein sequence ID" value="CCA54207.1"/>
    <property type="molecule type" value="Genomic_DNA"/>
</dbReference>
<dbReference type="PDB" id="8HX6">
    <property type="method" value="X-ray"/>
    <property type="resolution" value="2.14 A"/>
    <property type="chains" value="A/B=1-686"/>
</dbReference>
<dbReference type="PDB" id="8HX7">
    <property type="method" value="X-ray"/>
    <property type="resolution" value="1.95 A"/>
    <property type="chains" value="A/B=1-686"/>
</dbReference>
<dbReference type="PDB" id="8HX8">
    <property type="method" value="X-ray"/>
    <property type="resolution" value="2.55 A"/>
    <property type="chains" value="A/B=1-686"/>
</dbReference>
<dbReference type="PDB" id="8HX9">
    <property type="method" value="X-ray"/>
    <property type="resolution" value="2.03 A"/>
    <property type="chains" value="A/B=1-686"/>
</dbReference>
<dbReference type="PDBsum" id="8HX6"/>
<dbReference type="PDBsum" id="8HX7"/>
<dbReference type="PDBsum" id="8HX8"/>
<dbReference type="PDBsum" id="8HX9"/>
<dbReference type="SMR" id="F2RB79"/>
<dbReference type="STRING" id="953739.SVEN_0920"/>
<dbReference type="MEROPS" id="C26.955"/>
<dbReference type="MEROPS" id="C26.A25"/>
<dbReference type="KEGG" id="sve:SVEN_0920"/>
<dbReference type="PATRIC" id="fig|953739.5.peg.2966"/>
<dbReference type="eggNOG" id="COG0147">
    <property type="taxonomic scope" value="Bacteria"/>
</dbReference>
<dbReference type="eggNOG" id="COG0512">
    <property type="taxonomic scope" value="Bacteria"/>
</dbReference>
<dbReference type="HOGENOM" id="CLU_006493_0_1_11"/>
<dbReference type="OrthoDB" id="3518032at2"/>
<dbReference type="BioCyc" id="MetaCyc:MONOMER-20700"/>
<dbReference type="Proteomes" id="UP000006854">
    <property type="component" value="Chromosome"/>
</dbReference>
<dbReference type="GO" id="GO:0005737">
    <property type="term" value="C:cytoplasm"/>
    <property type="evidence" value="ECO:0007669"/>
    <property type="project" value="TreeGrafter"/>
</dbReference>
<dbReference type="GO" id="GO:0046820">
    <property type="term" value="F:4-amino-4-deoxychorismate synthase activity"/>
    <property type="evidence" value="ECO:0007669"/>
    <property type="project" value="UniProtKB-EC"/>
</dbReference>
<dbReference type="GO" id="GO:0008153">
    <property type="term" value="P:4-aminobenzoate biosynthetic process"/>
    <property type="evidence" value="ECO:0007669"/>
    <property type="project" value="TreeGrafter"/>
</dbReference>
<dbReference type="GO" id="GO:0017000">
    <property type="term" value="P:antibiotic biosynthetic process"/>
    <property type="evidence" value="ECO:0007669"/>
    <property type="project" value="UniProtKB-KW"/>
</dbReference>
<dbReference type="GO" id="GO:0009396">
    <property type="term" value="P:folic acid-containing compound biosynthetic process"/>
    <property type="evidence" value="ECO:0007669"/>
    <property type="project" value="InterPro"/>
</dbReference>
<dbReference type="GO" id="GO:0000162">
    <property type="term" value="P:L-tryptophan biosynthetic process"/>
    <property type="evidence" value="ECO:0007669"/>
    <property type="project" value="TreeGrafter"/>
</dbReference>
<dbReference type="CDD" id="cd01743">
    <property type="entry name" value="GATase1_Anthranilate_Synthase"/>
    <property type="match status" value="1"/>
</dbReference>
<dbReference type="FunFam" id="3.40.50.880:FF:000003">
    <property type="entry name" value="Anthranilate synthase component II"/>
    <property type="match status" value="1"/>
</dbReference>
<dbReference type="Gene3D" id="3.40.50.880">
    <property type="match status" value="1"/>
</dbReference>
<dbReference type="Gene3D" id="3.60.120.10">
    <property type="entry name" value="Anthranilate synthase"/>
    <property type="match status" value="1"/>
</dbReference>
<dbReference type="InterPro" id="IPR005802">
    <property type="entry name" value="ADC_synth_comp_1"/>
</dbReference>
<dbReference type="InterPro" id="IPR005801">
    <property type="entry name" value="ADC_synthase"/>
</dbReference>
<dbReference type="InterPro" id="IPR019999">
    <property type="entry name" value="Anth_synth_I-like"/>
</dbReference>
<dbReference type="InterPro" id="IPR006805">
    <property type="entry name" value="Anth_synth_I_N"/>
</dbReference>
<dbReference type="InterPro" id="IPR015890">
    <property type="entry name" value="Chorismate_C"/>
</dbReference>
<dbReference type="InterPro" id="IPR029062">
    <property type="entry name" value="Class_I_gatase-like"/>
</dbReference>
<dbReference type="InterPro" id="IPR017926">
    <property type="entry name" value="GATASE"/>
</dbReference>
<dbReference type="InterPro" id="IPR006221">
    <property type="entry name" value="TrpG/PapA_dom"/>
</dbReference>
<dbReference type="NCBIfam" id="TIGR00553">
    <property type="entry name" value="pabB"/>
    <property type="match status" value="1"/>
</dbReference>
<dbReference type="NCBIfam" id="TIGR00566">
    <property type="entry name" value="trpG_papA"/>
    <property type="match status" value="1"/>
</dbReference>
<dbReference type="PANTHER" id="PTHR11236">
    <property type="entry name" value="AMINOBENZOATE/ANTHRANILATE SYNTHASE"/>
    <property type="match status" value="1"/>
</dbReference>
<dbReference type="PANTHER" id="PTHR11236:SF18">
    <property type="entry name" value="AMINODEOXYCHORISMATE SYNTHASE"/>
    <property type="match status" value="1"/>
</dbReference>
<dbReference type="Pfam" id="PF04715">
    <property type="entry name" value="Anth_synt_I_N"/>
    <property type="match status" value="1"/>
</dbReference>
<dbReference type="Pfam" id="PF00425">
    <property type="entry name" value="Chorismate_bind"/>
    <property type="match status" value="1"/>
</dbReference>
<dbReference type="Pfam" id="PF00117">
    <property type="entry name" value="GATase"/>
    <property type="match status" value="1"/>
</dbReference>
<dbReference type="PRINTS" id="PR00097">
    <property type="entry name" value="ANTSNTHASEII"/>
</dbReference>
<dbReference type="PRINTS" id="PR00099">
    <property type="entry name" value="CPSGATASE"/>
</dbReference>
<dbReference type="PRINTS" id="PR00096">
    <property type="entry name" value="GATASE"/>
</dbReference>
<dbReference type="SUPFAM" id="SSF56322">
    <property type="entry name" value="ADC synthase"/>
    <property type="match status" value="1"/>
</dbReference>
<dbReference type="SUPFAM" id="SSF52317">
    <property type="entry name" value="Class I glutamine amidotransferase-like"/>
    <property type="match status" value="1"/>
</dbReference>
<dbReference type="PROSITE" id="PS51273">
    <property type="entry name" value="GATASE_TYPE_1"/>
    <property type="match status" value="1"/>
</dbReference>
<evidence type="ECO:0000250" key="1">
    <source>
        <dbReference type="UniProtKB" id="Q8LPN3"/>
    </source>
</evidence>
<evidence type="ECO:0000255" key="2">
    <source>
        <dbReference type="PROSITE-ProRule" id="PRU00605"/>
    </source>
</evidence>
<evidence type="ECO:0000269" key="3">
    <source>
    </source>
</evidence>
<evidence type="ECO:0000303" key="4">
    <source>
    </source>
</evidence>
<evidence type="ECO:0000303" key="5">
    <source>
    </source>
</evidence>
<evidence type="ECO:0000305" key="6"/>
<evidence type="ECO:0000305" key="7">
    <source>
    </source>
</evidence>
<evidence type="ECO:0000312" key="8">
    <source>
        <dbReference type="EMBL" id="CCA54207.1"/>
    </source>
</evidence>
<evidence type="ECO:0007829" key="9">
    <source>
        <dbReference type="PDB" id="8HX7"/>
    </source>
</evidence>
<evidence type="ECO:0007829" key="10">
    <source>
        <dbReference type="PDB" id="8HX8"/>
    </source>
</evidence>
<protein>
    <recommendedName>
        <fullName evidence="6">Aminodeoxychorismate synthase</fullName>
        <shortName evidence="6">ADC synthase</shortName>
        <ecNumber evidence="1">2.6.1.85</ecNumber>
    </recommendedName>
    <alternativeName>
        <fullName evidence="6">4-amino-4-deoxychorismate synthase</fullName>
    </alternativeName>
    <alternativeName>
        <fullName evidence="5">p-aminobenzoate synthase</fullName>
    </alternativeName>
</protein>
<feature type="chain" id="PRO_0000447218" description="Aminodeoxychorismate synthase">
    <location>
        <begin position="1"/>
        <end position="686"/>
    </location>
</feature>
<feature type="domain" description="Glutamine amidotransferase type-1" evidence="2">
    <location>
        <begin position="2"/>
        <end position="194"/>
    </location>
</feature>
<feature type="region of interest" description="PABB component" evidence="6">
    <location>
        <begin position="233"/>
        <end position="686"/>
    </location>
</feature>
<feature type="active site" description="Nucleophile" evidence="2">
    <location>
        <position position="81"/>
    </location>
</feature>
<feature type="active site" evidence="2">
    <location>
        <position position="168"/>
    </location>
</feature>
<feature type="active site" evidence="2">
    <location>
        <position position="170"/>
    </location>
</feature>
<feature type="sequence conflict" description="In Ref. 1; AAB30312." evidence="6" ref="1">
    <original>H</original>
    <variation>Q</variation>
    <location>
        <position position="14"/>
    </location>
</feature>
<feature type="sequence conflict" description="In Ref. 1; AAB30312." evidence="6" ref="1">
    <location>
        <position position="29"/>
    </location>
</feature>
<feature type="sequence conflict" description="In Ref. 1; AAB30312." evidence="6" ref="1">
    <original>FGGTVGLAP</original>
    <variation>SA</variation>
    <location>
        <begin position="91"/>
        <end position="99"/>
    </location>
</feature>
<feature type="sequence conflict" description="In Ref. 1; AAB30312." evidence="6" ref="1">
    <original>W</original>
    <variation>M</variation>
    <location>
        <position position="163"/>
    </location>
</feature>
<feature type="sequence conflict" description="In Ref. 1; AAB30312." evidence="6" ref="1">
    <original>H</original>
    <variation>P</variation>
    <location>
        <position position="168"/>
    </location>
</feature>
<feature type="sequence conflict" description="In Ref. 1; AAB30312." evidence="6" ref="1">
    <original>SP</original>
    <variation>WG</variation>
    <location>
        <begin position="201"/>
        <end position="202"/>
    </location>
</feature>
<feature type="sequence conflict" description="In Ref. 1; AAB30312." evidence="6" ref="1">
    <original>GCLPG</original>
    <variation>AACPA</variation>
    <location>
        <begin position="222"/>
        <end position="226"/>
    </location>
</feature>
<feature type="sequence conflict" description="In Ref. 1; AAB30312." evidence="6" ref="1">
    <original>R</original>
    <variation>P</variation>
    <location>
        <position position="244"/>
    </location>
</feature>
<feature type="sequence conflict" description="In Ref. 1; AAB30312." evidence="6" ref="1">
    <original>TRRPF</original>
    <variation>DAATL</variation>
    <location>
        <begin position="280"/>
        <end position="284"/>
    </location>
</feature>
<feature type="sequence conflict" description="In Ref. 1; AAB30312." evidence="6" ref="1">
    <original>RRRV</original>
    <variation>PPAG</variation>
    <location>
        <begin position="294"/>
        <end position="297"/>
    </location>
</feature>
<feature type="sequence conflict" description="In Ref. 1; AAB30312." evidence="6" ref="1">
    <original>HRS</original>
    <variation>VPA</variation>
    <location>
        <begin position="329"/>
        <end position="331"/>
    </location>
</feature>
<feature type="sequence conflict" description="In Ref. 1; AAB30312." evidence="6" ref="1">
    <original>PAE</original>
    <variation>RPR</variation>
    <location>
        <begin position="387"/>
        <end position="389"/>
    </location>
</feature>
<feature type="sequence conflict" description="In Ref. 1; AAB30312." evidence="6" ref="1">
    <original>YLKRIDECLKEI</original>
    <variation>SAL</variation>
    <location>
        <begin position="418"/>
        <end position="429"/>
    </location>
</feature>
<feature type="sequence conflict" description="In Ref. 1; AAB30312." evidence="6" ref="1">
    <original>A</original>
    <variation>R</variation>
    <location>
        <position position="460"/>
    </location>
</feature>
<feature type="sequence conflict" description="In Ref. 1; AAB30312." evidence="6" ref="1">
    <original>Y</original>
    <variation>S</variation>
    <location>
        <position position="466"/>
    </location>
</feature>
<feature type="sequence conflict" description="In Ref. 1; AAB30312." evidence="6" ref="1">
    <original>GT</original>
    <variation>AP</variation>
    <location>
        <begin position="507"/>
        <end position="508"/>
    </location>
</feature>
<feature type="sequence conflict" description="In Ref. 1; AAB30312." evidence="6" ref="1">
    <original>ETY</original>
    <variation>GDL</variation>
    <location>
        <begin position="558"/>
        <end position="560"/>
    </location>
</feature>
<feature type="sequence conflict" description="In Ref. 1; AAB30312." evidence="6" ref="1">
    <original>T</original>
    <variation>P</variation>
    <location>
        <position position="601"/>
    </location>
</feature>
<feature type="sequence conflict" description="In Ref. 1; AAB30312." evidence="6" ref="1">
    <original>YS</original>
    <variation>LP</variation>
    <location>
        <begin position="616"/>
        <end position="617"/>
    </location>
</feature>
<feature type="sequence conflict" description="In Ref. 1; AAB30312." evidence="6" ref="1">
    <original>TE</original>
    <variation>RQ</variation>
    <location>
        <begin position="664"/>
        <end position="665"/>
    </location>
</feature>
<feature type="strand" evidence="9">
    <location>
        <begin position="3"/>
        <end position="7"/>
    </location>
</feature>
<feature type="helix" evidence="9">
    <location>
        <begin position="13"/>
        <end position="24"/>
    </location>
</feature>
<feature type="strand" evidence="9">
    <location>
        <begin position="29"/>
        <end position="32"/>
    </location>
</feature>
<feature type="turn" evidence="9">
    <location>
        <begin position="37"/>
        <end position="39"/>
    </location>
</feature>
<feature type="helix" evidence="9">
    <location>
        <begin position="42"/>
        <end position="44"/>
    </location>
</feature>
<feature type="strand" evidence="9">
    <location>
        <begin position="46"/>
        <end position="50"/>
    </location>
</feature>
<feature type="strand" evidence="10">
    <location>
        <begin position="57"/>
        <end position="59"/>
    </location>
</feature>
<feature type="helix" evidence="10">
    <location>
        <begin position="60"/>
        <end position="63"/>
    </location>
</feature>
<feature type="helix" evidence="9">
    <location>
        <begin position="65"/>
        <end position="71"/>
    </location>
</feature>
<feature type="strand" evidence="9">
    <location>
        <begin position="77"/>
        <end position="80"/>
    </location>
</feature>
<feature type="helix" evidence="9">
    <location>
        <begin position="82"/>
        <end position="90"/>
    </location>
</feature>
<feature type="strand" evidence="9">
    <location>
        <begin position="95"/>
        <end position="111"/>
    </location>
</feature>
<feature type="helix" evidence="9">
    <location>
        <begin position="115"/>
        <end position="117"/>
    </location>
</feature>
<feature type="strand" evidence="9">
    <location>
        <begin position="122"/>
        <end position="134"/>
    </location>
</feature>
<feature type="strand" evidence="9">
    <location>
        <begin position="139"/>
        <end position="147"/>
    </location>
</feature>
<feature type="strand" evidence="9">
    <location>
        <begin position="152"/>
        <end position="168"/>
    </location>
</feature>
<feature type="helix" evidence="9">
    <location>
        <begin position="177"/>
        <end position="194"/>
    </location>
</feature>
<feature type="strand" evidence="9">
    <location>
        <begin position="203"/>
        <end position="211"/>
    </location>
</feature>
<feature type="helix" evidence="9">
    <location>
        <begin position="216"/>
        <end position="223"/>
    </location>
</feature>
<feature type="strand" evidence="9">
    <location>
        <begin position="226"/>
        <end position="228"/>
    </location>
</feature>
<feature type="strand" evidence="9">
    <location>
        <begin position="230"/>
        <end position="234"/>
    </location>
</feature>
<feature type="turn" evidence="9">
    <location>
        <begin position="240"/>
        <end position="242"/>
    </location>
</feature>
<feature type="strand" evidence="9">
    <location>
        <begin position="245"/>
        <end position="251"/>
    </location>
</feature>
<feature type="strand" evidence="9">
    <location>
        <begin position="257"/>
        <end position="262"/>
    </location>
</feature>
<feature type="turn" evidence="9">
    <location>
        <begin position="263"/>
        <end position="266"/>
    </location>
</feature>
<feature type="strand" evidence="9">
    <location>
        <begin position="267"/>
        <end position="271"/>
    </location>
</feature>
<feature type="strand" evidence="10">
    <location>
        <begin position="273"/>
        <end position="275"/>
    </location>
</feature>
<feature type="strand" evidence="9">
    <location>
        <begin position="277"/>
        <end position="282"/>
    </location>
</feature>
<feature type="helix" evidence="9">
    <location>
        <begin position="284"/>
        <end position="294"/>
    </location>
</feature>
<feature type="strand" evidence="9">
    <location>
        <begin position="304"/>
        <end position="306"/>
    </location>
</feature>
<feature type="strand" evidence="9">
    <location>
        <begin position="309"/>
        <end position="315"/>
    </location>
</feature>
<feature type="helix" evidence="9">
    <location>
        <begin position="317"/>
        <end position="322"/>
    </location>
</feature>
<feature type="strand" evidence="9">
    <location>
        <begin position="335"/>
        <end position="348"/>
    </location>
</feature>
<feature type="turn" evidence="9">
    <location>
        <begin position="349"/>
        <end position="352"/>
    </location>
</feature>
<feature type="strand" evidence="9">
    <location>
        <begin position="353"/>
        <end position="361"/>
    </location>
</feature>
<feature type="helix" evidence="9">
    <location>
        <begin position="368"/>
        <end position="380"/>
    </location>
</feature>
<feature type="helix" evidence="9">
    <location>
        <begin position="400"/>
        <end position="402"/>
    </location>
</feature>
<feature type="strand" evidence="9">
    <location>
        <begin position="410"/>
        <end position="413"/>
    </location>
</feature>
<feature type="helix" evidence="9">
    <location>
        <begin position="415"/>
        <end position="430"/>
    </location>
</feature>
<feature type="strand" evidence="9">
    <location>
        <begin position="435"/>
        <end position="446"/>
    </location>
</feature>
<feature type="helix" evidence="9">
    <location>
        <begin position="451"/>
        <end position="461"/>
    </location>
</feature>
<feature type="strand" evidence="9">
    <location>
        <begin position="465"/>
        <end position="471"/>
    </location>
</feature>
<feature type="strand" evidence="9">
    <location>
        <begin position="476"/>
        <end position="481"/>
    </location>
</feature>
<feature type="strand" evidence="9">
    <location>
        <begin position="484"/>
        <end position="488"/>
    </location>
</feature>
<feature type="strand" evidence="9">
    <location>
        <begin position="492"/>
        <end position="496"/>
    </location>
</feature>
<feature type="strand" evidence="9">
    <location>
        <begin position="499"/>
        <end position="505"/>
    </location>
</feature>
<feature type="helix" evidence="9">
    <location>
        <begin position="509"/>
        <end position="521"/>
    </location>
</feature>
<feature type="helix" evidence="9">
    <location>
        <begin position="523"/>
        <end position="541"/>
    </location>
</feature>
<feature type="turn" evidence="9">
    <location>
        <begin position="546"/>
        <end position="548"/>
    </location>
</feature>
<feature type="strand" evidence="9">
    <location>
        <begin position="550"/>
        <end position="560"/>
    </location>
</feature>
<feature type="strand" evidence="9">
    <location>
        <begin position="563"/>
        <end position="574"/>
    </location>
</feature>
<feature type="helix" evidence="9">
    <location>
        <begin position="580"/>
        <end position="587"/>
    </location>
</feature>
<feature type="helix" evidence="9">
    <location>
        <begin position="591"/>
        <end position="593"/>
    </location>
</feature>
<feature type="strand" evidence="9">
    <location>
        <begin position="595"/>
        <end position="597"/>
    </location>
</feature>
<feature type="helix" evidence="9">
    <location>
        <begin position="598"/>
        <end position="609"/>
    </location>
</feature>
<feature type="turn" evidence="9">
    <location>
        <begin position="614"/>
        <end position="617"/>
    </location>
</feature>
<feature type="strand" evidence="9">
    <location>
        <begin position="618"/>
        <end position="624"/>
    </location>
</feature>
<feature type="strand" evidence="9">
    <location>
        <begin position="629"/>
        <end position="633"/>
    </location>
</feature>
<feature type="strand" evidence="9">
    <location>
        <begin position="636"/>
        <end position="641"/>
    </location>
</feature>
<feature type="strand" evidence="9">
    <location>
        <begin position="644"/>
        <end position="653"/>
    </location>
</feature>
<feature type="helix" evidence="9">
    <location>
        <begin position="659"/>
        <end position="669"/>
    </location>
</feature>
<feature type="helix" evidence="9">
    <location>
        <begin position="671"/>
        <end position="677"/>
    </location>
</feature>
<proteinExistence type="evidence at protein level"/>
<comment type="function">
    <text evidence="1 3">Involved in chloramphenicol biosynthesis (PubMed:8704974). Catalyzes the biosynthesis of 4-amino-4-deoxychorismate (ADC) from chorismate and glutamine (By similarity).</text>
</comment>
<comment type="catalytic activity">
    <reaction evidence="1">
        <text>chorismate + L-glutamine = 4-amino-4-deoxychorismate + L-glutamate</text>
        <dbReference type="Rhea" id="RHEA:11672"/>
        <dbReference type="ChEBI" id="CHEBI:29748"/>
        <dbReference type="ChEBI" id="CHEBI:29985"/>
        <dbReference type="ChEBI" id="CHEBI:58359"/>
        <dbReference type="ChEBI" id="CHEBI:58406"/>
        <dbReference type="EC" id="2.6.1.85"/>
    </reaction>
    <physiologicalReaction direction="left-to-right" evidence="7">
        <dbReference type="Rhea" id="RHEA:11673"/>
    </physiologicalReaction>
</comment>
<comment type="pathway">
    <text evidence="3">Antibiotic biosynthesis.</text>
</comment>
<comment type="disruption phenotype">
    <text evidence="3">Disruption of the gene decreases sulfanilamide resistance and blocks chloramphenicol production.</text>
</comment>
<comment type="similarity">
    <text evidence="6">In the C-terminal section; belongs to the anthranilate synthase component I family.</text>
</comment>
<sequence>MRTLLIDNYDSFTHNLFQYIGEATGQPPVVVPNDADWSRLPLEDFDAIVVSPGPGSPDRERDFGISRRAITDSGLPVLGVCLGHQGIAQLFGGTVGLAPEPMHGRVSEVRHTGEDVFRGLPSPFTAVRYHSLAATDLPDELEPLAWSDDGVVMGLRHREKPLWGVQFHPESIGSDFGREIMANFRDLALAHHRARRDAADSPYELHVRRVDVLPDAEEVRRGCLPGEGATFWLDSSSVLEGASRFSFLGDDRGPLAEYLTYRVADGVVSVRGSDGTTTRTRRPFFSYLEEQLERRRVPVAPDLPFEFNLGYVGYLGYELKAETTGDPAHRSPHPDAAFLFADRAIALDHQEGCCYLLALDRRGHDDGARAWLRETAETLTGLAVRVPAEPTPAMVFGVPEAAAGFGPLARARHDKDAYLKRIDECLKEIRNGESYEICLTNMVTAPTEATALPLYSALRAISPVPYGALLEFPELSVLSASPERFLTIGADGGVESKPIKGTRPRGGTAEEDERLRADLAGREKDRAENLMIVDLVRNDLNSVCAIGSVHVPRLFEVETYAPVHQLVSTIRGRLRPGTSTAACVRAAFPGGSMTGAPKKRTMEIIDRLEEGPRGVYSGALGWFALSGAADLSIVIRTIVLADGRAEFGVGGAIVSLSDQEEEFTETVVKARAMVTALDGSAVAGAR</sequence>
<gene>
    <name evidence="4" type="primary">cmlB</name>
    <name evidence="5" type="synonym">pabAB</name>
    <name evidence="8" type="ordered locus">SVEN_0920</name>
</gene>
<organism>
    <name type="scientific">Streptomyces venezuelae (strain ATCC 10712 / CBS 650.69 / DSM 40230 / JCM 4526 / NBRC 13096 / PD 04745)</name>
    <dbReference type="NCBI Taxonomy" id="953739"/>
    <lineage>
        <taxon>Bacteria</taxon>
        <taxon>Bacillati</taxon>
        <taxon>Actinomycetota</taxon>
        <taxon>Actinomycetes</taxon>
        <taxon>Kitasatosporales</taxon>
        <taxon>Streptomycetaceae</taxon>
        <taxon>Streptomyces</taxon>
    </lineage>
</organism>